<reference key="1">
    <citation type="journal article" date="2008" name="Genome Res.">
        <title>Comparative genome analysis of Salmonella enteritidis PT4 and Salmonella gallinarum 287/91 provides insights into evolutionary and host adaptation pathways.</title>
        <authorList>
            <person name="Thomson N.R."/>
            <person name="Clayton D.J."/>
            <person name="Windhorst D."/>
            <person name="Vernikos G."/>
            <person name="Davidson S."/>
            <person name="Churcher C."/>
            <person name="Quail M.A."/>
            <person name="Stevens M."/>
            <person name="Jones M.A."/>
            <person name="Watson M."/>
            <person name="Barron A."/>
            <person name="Layton A."/>
            <person name="Pickard D."/>
            <person name="Kingsley R.A."/>
            <person name="Bignell A."/>
            <person name="Clark L."/>
            <person name="Harris B."/>
            <person name="Ormond D."/>
            <person name="Abdellah Z."/>
            <person name="Brooks K."/>
            <person name="Cherevach I."/>
            <person name="Chillingworth T."/>
            <person name="Woodward J."/>
            <person name="Norberczak H."/>
            <person name="Lord A."/>
            <person name="Arrowsmith C."/>
            <person name="Jagels K."/>
            <person name="Moule S."/>
            <person name="Mungall K."/>
            <person name="Saunders M."/>
            <person name="Whitehead S."/>
            <person name="Chabalgoity J.A."/>
            <person name="Maskell D."/>
            <person name="Humphreys T."/>
            <person name="Roberts M."/>
            <person name="Barrow P.A."/>
            <person name="Dougan G."/>
            <person name="Parkhill J."/>
        </authorList>
    </citation>
    <scope>NUCLEOTIDE SEQUENCE [LARGE SCALE GENOMIC DNA]</scope>
    <source>
        <strain>P125109</strain>
    </source>
</reference>
<comment type="function">
    <text evidence="1">Required for the expression of anaerobic nitric oxide (NO) reductase, acts as a transcriptional activator for at least the norVW operon. Activation also requires sigma-54.</text>
</comment>
<comment type="pathway">
    <text evidence="1">Nitrogen metabolism; nitric oxide reduction.</text>
</comment>
<dbReference type="EMBL" id="AM933172">
    <property type="protein sequence ID" value="CAR34259.1"/>
    <property type="molecule type" value="Genomic_DNA"/>
</dbReference>
<dbReference type="RefSeq" id="WP_000010816.1">
    <property type="nucleotide sequence ID" value="NC_011294.1"/>
</dbReference>
<dbReference type="SMR" id="B5QV88"/>
<dbReference type="KEGG" id="set:SEN2680"/>
<dbReference type="HOGENOM" id="CLU_000445_125_2_6"/>
<dbReference type="UniPathway" id="UPA00638"/>
<dbReference type="Proteomes" id="UP000000613">
    <property type="component" value="Chromosome"/>
</dbReference>
<dbReference type="GO" id="GO:0005524">
    <property type="term" value="F:ATP binding"/>
    <property type="evidence" value="ECO:0007669"/>
    <property type="project" value="UniProtKB-UniRule"/>
</dbReference>
<dbReference type="GO" id="GO:0016887">
    <property type="term" value="F:ATP hydrolysis activity"/>
    <property type="evidence" value="ECO:0007669"/>
    <property type="project" value="InterPro"/>
</dbReference>
<dbReference type="GO" id="GO:0003677">
    <property type="term" value="F:DNA binding"/>
    <property type="evidence" value="ECO:0007669"/>
    <property type="project" value="UniProtKB-KW"/>
</dbReference>
<dbReference type="GO" id="GO:0003700">
    <property type="term" value="F:DNA-binding transcription factor activity"/>
    <property type="evidence" value="ECO:0007669"/>
    <property type="project" value="UniProtKB-UniRule"/>
</dbReference>
<dbReference type="GO" id="GO:0000160">
    <property type="term" value="P:phosphorelay signal transduction system"/>
    <property type="evidence" value="ECO:0007669"/>
    <property type="project" value="UniProtKB-UniRule"/>
</dbReference>
<dbReference type="CDD" id="cd00009">
    <property type="entry name" value="AAA"/>
    <property type="match status" value="1"/>
</dbReference>
<dbReference type="FunFam" id="1.10.8.60:FF:000045">
    <property type="entry name" value="Anaerobic nitric oxide reductase transcription regulator NorR"/>
    <property type="match status" value="1"/>
</dbReference>
<dbReference type="FunFam" id="3.30.450.40:FF:000021">
    <property type="entry name" value="Anaerobic nitric oxide reductase transcription regulator NorR"/>
    <property type="match status" value="1"/>
</dbReference>
<dbReference type="FunFam" id="3.40.50.300:FF:000006">
    <property type="entry name" value="DNA-binding transcriptional regulator NtrC"/>
    <property type="match status" value="1"/>
</dbReference>
<dbReference type="Gene3D" id="1.10.8.60">
    <property type="match status" value="1"/>
</dbReference>
<dbReference type="Gene3D" id="3.30.450.40">
    <property type="match status" value="1"/>
</dbReference>
<dbReference type="Gene3D" id="1.10.10.60">
    <property type="entry name" value="Homeodomain-like"/>
    <property type="match status" value="1"/>
</dbReference>
<dbReference type="Gene3D" id="3.40.50.300">
    <property type="entry name" value="P-loop containing nucleotide triphosphate hydrolases"/>
    <property type="match status" value="1"/>
</dbReference>
<dbReference type="HAMAP" id="MF_01314">
    <property type="entry name" value="NorR"/>
    <property type="match status" value="1"/>
</dbReference>
<dbReference type="InterPro" id="IPR003593">
    <property type="entry name" value="AAA+_ATPase"/>
</dbReference>
<dbReference type="InterPro" id="IPR003018">
    <property type="entry name" value="GAF"/>
</dbReference>
<dbReference type="InterPro" id="IPR029016">
    <property type="entry name" value="GAF-like_dom_sf"/>
</dbReference>
<dbReference type="InterPro" id="IPR009057">
    <property type="entry name" value="Homeodomain-like_sf"/>
</dbReference>
<dbReference type="InterPro" id="IPR023944">
    <property type="entry name" value="NorR"/>
</dbReference>
<dbReference type="InterPro" id="IPR027417">
    <property type="entry name" value="P-loop_NTPase"/>
</dbReference>
<dbReference type="InterPro" id="IPR002078">
    <property type="entry name" value="Sigma_54_int"/>
</dbReference>
<dbReference type="InterPro" id="IPR025662">
    <property type="entry name" value="Sigma_54_int_dom_ATP-bd_1"/>
</dbReference>
<dbReference type="InterPro" id="IPR025943">
    <property type="entry name" value="Sigma_54_int_dom_ATP-bd_2"/>
</dbReference>
<dbReference type="InterPro" id="IPR025944">
    <property type="entry name" value="Sigma_54_int_dom_CS"/>
</dbReference>
<dbReference type="NCBIfam" id="NF003451">
    <property type="entry name" value="PRK05022.1"/>
    <property type="match status" value="1"/>
</dbReference>
<dbReference type="PANTHER" id="PTHR32071:SF35">
    <property type="entry name" value="ANAEROBIC NITRIC OXIDE REDUCTASE TRANSCRIPTION REGULATOR NORR"/>
    <property type="match status" value="1"/>
</dbReference>
<dbReference type="PANTHER" id="PTHR32071">
    <property type="entry name" value="TRANSCRIPTIONAL REGULATORY PROTEIN"/>
    <property type="match status" value="1"/>
</dbReference>
<dbReference type="Pfam" id="PF01590">
    <property type="entry name" value="GAF"/>
    <property type="match status" value="1"/>
</dbReference>
<dbReference type="Pfam" id="PF00158">
    <property type="entry name" value="Sigma54_activat"/>
    <property type="match status" value="1"/>
</dbReference>
<dbReference type="SMART" id="SM00382">
    <property type="entry name" value="AAA"/>
    <property type="match status" value="1"/>
</dbReference>
<dbReference type="SMART" id="SM00065">
    <property type="entry name" value="GAF"/>
    <property type="match status" value="1"/>
</dbReference>
<dbReference type="SUPFAM" id="SSF55781">
    <property type="entry name" value="GAF domain-like"/>
    <property type="match status" value="1"/>
</dbReference>
<dbReference type="SUPFAM" id="SSF46689">
    <property type="entry name" value="Homeodomain-like"/>
    <property type="match status" value="1"/>
</dbReference>
<dbReference type="SUPFAM" id="SSF52540">
    <property type="entry name" value="P-loop containing nucleoside triphosphate hydrolases"/>
    <property type="match status" value="1"/>
</dbReference>
<dbReference type="PROSITE" id="PS00675">
    <property type="entry name" value="SIGMA54_INTERACT_1"/>
    <property type="match status" value="1"/>
</dbReference>
<dbReference type="PROSITE" id="PS00676">
    <property type="entry name" value="SIGMA54_INTERACT_2"/>
    <property type="match status" value="1"/>
</dbReference>
<dbReference type="PROSITE" id="PS00688">
    <property type="entry name" value="SIGMA54_INTERACT_3"/>
    <property type="match status" value="1"/>
</dbReference>
<dbReference type="PROSITE" id="PS50045">
    <property type="entry name" value="SIGMA54_INTERACT_4"/>
    <property type="match status" value="1"/>
</dbReference>
<accession>B5QV88</accession>
<protein>
    <recommendedName>
        <fullName evidence="1">Anaerobic nitric oxide reductase transcription regulator NorR</fullName>
    </recommendedName>
</protein>
<keyword id="KW-0067">ATP-binding</keyword>
<keyword id="KW-0238">DNA-binding</keyword>
<keyword id="KW-0547">Nucleotide-binding</keyword>
<keyword id="KW-0597">Phosphoprotein</keyword>
<keyword id="KW-0804">Transcription</keyword>
<keyword id="KW-0805">Transcription regulation</keyword>
<organism>
    <name type="scientific">Salmonella enteritidis PT4 (strain P125109)</name>
    <dbReference type="NCBI Taxonomy" id="550537"/>
    <lineage>
        <taxon>Bacteria</taxon>
        <taxon>Pseudomonadati</taxon>
        <taxon>Pseudomonadota</taxon>
        <taxon>Gammaproteobacteria</taxon>
        <taxon>Enterobacterales</taxon>
        <taxon>Enterobacteriaceae</taxon>
        <taxon>Salmonella</taxon>
    </lineage>
</organism>
<evidence type="ECO:0000255" key="1">
    <source>
        <dbReference type="HAMAP-Rule" id="MF_01314"/>
    </source>
</evidence>
<sequence length="506" mass="55378">MSFSVEVLAGIAIELQRGIGHQDRFQRLITTLRQVLACDASALLRYESRQFIPLAIDGLAQDVLGRRFTLEGHPRLEAIARAGDVVRFPADSDLPDPYDGLIPGQESLKVHACVGLPLFAGQNLIGALTLDAMTPEQFEVFSDEELRLVAALAAGALSNALLIEQLESQNMLPGSSGVFEPIKETHMIGLSPAMTQLKKEIEIVAGSDLNVLIGGETGTGKELVAKAIHQGSPRAVNPLVYLNCAALPESVAESELFGHVKGAFTGAISNRSGKFEMADNGTLFLDEIGELSLALQAKLLRVLQYGDIQRVGDDRSLRVDVRVLAATNRDLREEVLAGRFRADLFHRLSVFPLFVPPLRERGDDVVLLAGYFCEQCRLRLGLSRVVLSPGARRHLLNYGWPGNVRELEHAIHRAVVLARATRAGDEVVLEEQHFALSEDVLPAPSAESFLALPACRNLRESTENFQREMIRQALAQNNHNWAASARALETDVANLHRLAKRLGLKD</sequence>
<name>NORR_SALEP</name>
<proteinExistence type="inferred from homology"/>
<gene>
    <name evidence="1" type="primary">norR</name>
    <name type="ordered locus">SEN2680</name>
</gene>
<feature type="chain" id="PRO_1000141198" description="Anaerobic nitric oxide reductase transcription regulator NorR">
    <location>
        <begin position="1"/>
        <end position="506"/>
    </location>
</feature>
<feature type="domain" description="Sigma-54 factor interaction" evidence="1">
    <location>
        <begin position="187"/>
        <end position="416"/>
    </location>
</feature>
<feature type="DNA-binding region" description="H-T-H motif" evidence="1">
    <location>
        <begin position="481"/>
        <end position="500"/>
    </location>
</feature>
<feature type="binding site" evidence="1">
    <location>
        <begin position="215"/>
        <end position="222"/>
    </location>
    <ligand>
        <name>ATP</name>
        <dbReference type="ChEBI" id="CHEBI:30616"/>
    </ligand>
</feature>
<feature type="binding site" evidence="1">
    <location>
        <begin position="278"/>
        <end position="287"/>
    </location>
    <ligand>
        <name>ATP</name>
        <dbReference type="ChEBI" id="CHEBI:30616"/>
    </ligand>
</feature>
<feature type="modified residue" description="4-aspartylphosphate" evidence="1">
    <location>
        <position position="57"/>
    </location>
</feature>